<comment type="function">
    <text evidence="2">Replicates viral genomic DNA. This polymerase possesses two enzymatic activities: DNA synthesis (polymerase) and an exonucleolytic activity that degrades single-stranded DNA in the 3'-5' direction.</text>
</comment>
<comment type="catalytic activity">
    <reaction>
        <text>DNA(n) + a 2'-deoxyribonucleoside 5'-triphosphate = DNA(n+1) + diphosphate</text>
        <dbReference type="Rhea" id="RHEA:22508"/>
        <dbReference type="Rhea" id="RHEA-COMP:17339"/>
        <dbReference type="Rhea" id="RHEA-COMP:17340"/>
        <dbReference type="ChEBI" id="CHEBI:33019"/>
        <dbReference type="ChEBI" id="CHEBI:61560"/>
        <dbReference type="ChEBI" id="CHEBI:173112"/>
        <dbReference type="EC" id="2.7.7.7"/>
    </reaction>
</comment>
<comment type="similarity">
    <text evidence="3">Belongs to the DNA polymerase type-A family.</text>
</comment>
<accession>Q05254</accession>
<keyword id="KW-0235">DNA replication</keyword>
<keyword id="KW-0238">DNA-binding</keyword>
<keyword id="KW-0239">DNA-directed DNA polymerase</keyword>
<keyword id="KW-0269">Exonuclease</keyword>
<keyword id="KW-0378">Hydrolase</keyword>
<keyword id="KW-0540">Nuclease</keyword>
<keyword id="KW-0548">Nucleotidyltransferase</keyword>
<keyword id="KW-1185">Reference proteome</keyword>
<keyword id="KW-0808">Transferase</keyword>
<keyword id="KW-1194">Viral DNA replication</keyword>
<sequence>MIELRHEVQGDLVTVNVVETPEDLEGFRNFIRAHLNCLAVDTETTGLDIYSDTFECRLVQFGTQDEAWVVPVELGDVFIEDVRIAIGALKRMVLQNASFDLQVLDQCFGIEMEGLWPRVLDTQILAKLVDPRPFEAGGFGHSLEELIAKFISEDQAENVKKLMAKLAAEHKTTKAKIWSTIDLFHPEYLLYAGMDTIFTARVCKSLTPLVPDVSRSLVPYEHKISEICSYIDRQGFLLDVEYSRSLAEKWLADQEVWEAIAFTEYGVEKVNSTEDLAEGLEEMGVKITGRTETGKRQVNAALLDKLVEDGNELAAIAQEAKKLGKWRKTWVQKFIDTRDSEDRCHTFINPLQARTSRMSITGIPAQTLPSSDWIVRRCFIAEPGDVMASVDYQAQELRVLAALSGDRNMIEAFENGADLHQMTADAAQVPRKVGKTANFQKVYGGGAKALAEAVGISIPVAKRVHEAFSATYPGVERLSKKLAMEAGRNGYIVNAMGRRLPVDSSRTYSALNYMIQSSSRDVTCRALIRLHEAGYTPYLRLPIHDEIVASLPASEAERAAAHIGHLMQEQMGPVLVGTDPEVGKRSWGSLYGADY</sequence>
<proteinExistence type="inferred from homology"/>
<name>DPOL_BPML5</name>
<organism>
    <name type="scientific">Mycobacterium phage L5</name>
    <name type="common">Mycobacteriophage L5</name>
    <dbReference type="NCBI Taxonomy" id="31757"/>
    <lineage>
        <taxon>Viruses</taxon>
        <taxon>Duplodnaviria</taxon>
        <taxon>Heunggongvirae</taxon>
        <taxon>Uroviricota</taxon>
        <taxon>Caudoviricetes</taxon>
        <taxon>Fromanvirus</taxon>
    </lineage>
</organism>
<protein>
    <recommendedName>
        <fullName>DNA polymerase</fullName>
        <ecNumber>2.7.7.7</ecNumber>
        <ecNumber evidence="2">3.1.11.-</ecNumber>
    </recommendedName>
</protein>
<dbReference type="EC" id="2.7.7.7"/>
<dbReference type="EC" id="3.1.11.-" evidence="2"/>
<dbReference type="EMBL" id="Z18946">
    <property type="protein sequence ID" value="CAA79420.1"/>
    <property type="molecule type" value="Genomic_DNA"/>
</dbReference>
<dbReference type="PIR" id="S30989">
    <property type="entry name" value="S30989"/>
</dbReference>
<dbReference type="RefSeq" id="NP_039708.1">
    <property type="nucleotide sequence ID" value="NC_001335.1"/>
</dbReference>
<dbReference type="SMR" id="Q05254"/>
<dbReference type="GeneID" id="2942951"/>
<dbReference type="KEGG" id="vg:2942951"/>
<dbReference type="OrthoDB" id="14842at10239"/>
<dbReference type="Proteomes" id="UP000002123">
    <property type="component" value="Genome"/>
</dbReference>
<dbReference type="GO" id="GO:0008408">
    <property type="term" value="F:3'-5' exonuclease activity"/>
    <property type="evidence" value="ECO:0007669"/>
    <property type="project" value="InterPro"/>
</dbReference>
<dbReference type="GO" id="GO:0003677">
    <property type="term" value="F:DNA binding"/>
    <property type="evidence" value="ECO:0007669"/>
    <property type="project" value="UniProtKB-KW"/>
</dbReference>
<dbReference type="GO" id="GO:0003887">
    <property type="term" value="F:DNA-directed DNA polymerase activity"/>
    <property type="evidence" value="ECO:0007669"/>
    <property type="project" value="UniProtKB-KW"/>
</dbReference>
<dbReference type="GO" id="GO:0006261">
    <property type="term" value="P:DNA-templated DNA replication"/>
    <property type="evidence" value="ECO:0007669"/>
    <property type="project" value="InterPro"/>
</dbReference>
<dbReference type="GO" id="GO:0006302">
    <property type="term" value="P:double-strand break repair"/>
    <property type="evidence" value="ECO:0007669"/>
    <property type="project" value="TreeGrafter"/>
</dbReference>
<dbReference type="GO" id="GO:0039693">
    <property type="term" value="P:viral DNA genome replication"/>
    <property type="evidence" value="ECO:0007669"/>
    <property type="project" value="UniProtKB-KW"/>
</dbReference>
<dbReference type="Gene3D" id="3.30.70.370">
    <property type="match status" value="1"/>
</dbReference>
<dbReference type="Gene3D" id="1.10.150.20">
    <property type="entry name" value="5' to 3' exonuclease, C-terminal subdomain"/>
    <property type="match status" value="1"/>
</dbReference>
<dbReference type="Gene3D" id="3.30.420.10">
    <property type="entry name" value="Ribonuclease H-like superfamily/Ribonuclease H"/>
    <property type="match status" value="1"/>
</dbReference>
<dbReference type="Gene3D" id="1.20.1060.10">
    <property type="entry name" value="Taq DNA Polymerase, Chain T, domain 4"/>
    <property type="match status" value="1"/>
</dbReference>
<dbReference type="InterPro" id="IPR002562">
    <property type="entry name" value="3'-5'_exonuclease_dom"/>
</dbReference>
<dbReference type="InterPro" id="IPR019760">
    <property type="entry name" value="DNA-dir_DNA_pol_A_CS"/>
</dbReference>
<dbReference type="InterPro" id="IPR001098">
    <property type="entry name" value="DNA-dir_DNA_pol_A_palm_dom"/>
</dbReference>
<dbReference type="InterPro" id="IPR043502">
    <property type="entry name" value="DNA/RNA_pol_sf"/>
</dbReference>
<dbReference type="InterPro" id="IPR002298">
    <property type="entry name" value="DNA_polymerase_A"/>
</dbReference>
<dbReference type="InterPro" id="IPR012337">
    <property type="entry name" value="RNaseH-like_sf"/>
</dbReference>
<dbReference type="InterPro" id="IPR036397">
    <property type="entry name" value="RNaseH_sf"/>
</dbReference>
<dbReference type="PANTHER" id="PTHR10133">
    <property type="entry name" value="DNA POLYMERASE I"/>
    <property type="match status" value="1"/>
</dbReference>
<dbReference type="PANTHER" id="PTHR10133:SF27">
    <property type="entry name" value="DNA POLYMERASE NU"/>
    <property type="match status" value="1"/>
</dbReference>
<dbReference type="Pfam" id="PF00476">
    <property type="entry name" value="DNA_pol_A"/>
    <property type="match status" value="1"/>
</dbReference>
<dbReference type="Pfam" id="PF01612">
    <property type="entry name" value="DNA_pol_A_exo1"/>
    <property type="match status" value="1"/>
</dbReference>
<dbReference type="SMART" id="SM00474">
    <property type="entry name" value="35EXOc"/>
    <property type="match status" value="1"/>
</dbReference>
<dbReference type="SMART" id="SM00482">
    <property type="entry name" value="POLAc"/>
    <property type="match status" value="1"/>
</dbReference>
<dbReference type="SUPFAM" id="SSF56672">
    <property type="entry name" value="DNA/RNA polymerases"/>
    <property type="match status" value="1"/>
</dbReference>
<dbReference type="SUPFAM" id="SSF53098">
    <property type="entry name" value="Ribonuclease H-like"/>
    <property type="match status" value="1"/>
</dbReference>
<dbReference type="PROSITE" id="PS00447">
    <property type="entry name" value="DNA_POLYMERASE_A"/>
    <property type="match status" value="1"/>
</dbReference>
<feature type="chain" id="PRO_0000101264" description="DNA polymerase">
    <location>
        <begin position="1"/>
        <end position="595"/>
    </location>
</feature>
<feature type="domain" description="3'-5' exonuclease">
    <location>
        <begin position="1"/>
        <end position="212"/>
    </location>
</feature>
<feature type="region of interest" description="Polymerase" evidence="1">
    <location>
        <begin position="213"/>
        <end position="595"/>
    </location>
</feature>
<gene>
    <name type="primary">44</name>
</gene>
<reference key="1">
    <citation type="journal article" date="1993" name="Mol. Microbiol.">
        <title>DNA sequence, structure and gene expression of mycobacteriophage L5: a phage system for mycobacterial genetics.</title>
        <authorList>
            <person name="Hatfull G.F."/>
            <person name="Sarkis G.J."/>
        </authorList>
    </citation>
    <scope>NUCLEOTIDE SEQUENCE [LARGE SCALE GENOMIC DNA]</scope>
</reference>
<organismHost>
    <name type="scientific">Mycobacterium</name>
    <dbReference type="NCBI Taxonomy" id="1763"/>
</organismHost>
<evidence type="ECO:0000250" key="1"/>
<evidence type="ECO:0000250" key="2">
    <source>
        <dbReference type="UniProtKB" id="P06225"/>
    </source>
</evidence>
<evidence type="ECO:0000305" key="3"/>